<feature type="chain" id="PRO_0000333425" description="Protein SIP5">
    <location>
        <begin position="1"/>
        <end position="476"/>
    </location>
</feature>
<feature type="region of interest" description="Disordered" evidence="2">
    <location>
        <begin position="1"/>
        <end position="48"/>
    </location>
</feature>
<feature type="region of interest" description="Disordered" evidence="2">
    <location>
        <begin position="351"/>
        <end position="379"/>
    </location>
</feature>
<feature type="compositionally biased region" description="Low complexity" evidence="2">
    <location>
        <begin position="28"/>
        <end position="45"/>
    </location>
</feature>
<feature type="compositionally biased region" description="Basic and acidic residues" evidence="2">
    <location>
        <begin position="358"/>
        <end position="377"/>
    </location>
</feature>
<gene>
    <name type="primary">SIP5</name>
    <name type="ordered locus">ADR255W</name>
    <name type="ORF">AGOS_ADR255W</name>
</gene>
<comment type="function">
    <text evidence="1">May negatively regulate the SNF1 kinase.</text>
</comment>
<comment type="subcellular location">
    <subcellularLocation>
        <location evidence="1">Cytoplasm</location>
    </subcellularLocation>
</comment>
<comment type="similarity">
    <text evidence="3">Belongs to the SIP5 family.</text>
</comment>
<organism>
    <name type="scientific">Eremothecium gossypii (strain ATCC 10895 / CBS 109.51 / FGSC 9923 / NRRL Y-1056)</name>
    <name type="common">Yeast</name>
    <name type="synonym">Ashbya gossypii</name>
    <dbReference type="NCBI Taxonomy" id="284811"/>
    <lineage>
        <taxon>Eukaryota</taxon>
        <taxon>Fungi</taxon>
        <taxon>Dikarya</taxon>
        <taxon>Ascomycota</taxon>
        <taxon>Saccharomycotina</taxon>
        <taxon>Saccharomycetes</taxon>
        <taxon>Saccharomycetales</taxon>
        <taxon>Saccharomycetaceae</taxon>
        <taxon>Eremothecium</taxon>
    </lineage>
</organism>
<name>SIP5_EREGS</name>
<accession>Q759M1</accession>
<reference key="1">
    <citation type="journal article" date="2004" name="Science">
        <title>The Ashbya gossypii genome as a tool for mapping the ancient Saccharomyces cerevisiae genome.</title>
        <authorList>
            <person name="Dietrich F.S."/>
            <person name="Voegeli S."/>
            <person name="Brachat S."/>
            <person name="Lerch A."/>
            <person name="Gates K."/>
            <person name="Steiner S."/>
            <person name="Mohr C."/>
            <person name="Poehlmann R."/>
            <person name="Luedi P."/>
            <person name="Choi S."/>
            <person name="Wing R.A."/>
            <person name="Flavier A."/>
            <person name="Gaffney T.D."/>
            <person name="Philippsen P."/>
        </authorList>
    </citation>
    <scope>NUCLEOTIDE SEQUENCE [LARGE SCALE GENOMIC DNA]</scope>
    <source>
        <strain>ATCC 10895 / CBS 109.51 / FGSC 9923 / NRRL Y-1056</strain>
    </source>
</reference>
<reference key="2">
    <citation type="journal article" date="2013" name="G3 (Bethesda)">
        <title>Genomes of Ashbya fungi isolated from insects reveal four mating-type loci, numerous translocations, lack of transposons, and distinct gene duplications.</title>
        <authorList>
            <person name="Dietrich F.S."/>
            <person name="Voegeli S."/>
            <person name="Kuo S."/>
            <person name="Philippsen P."/>
        </authorList>
    </citation>
    <scope>GENOME REANNOTATION</scope>
    <scope>SEQUENCE REVISION TO 295</scope>
    <source>
        <strain>ATCC 10895 / CBS 109.51 / FGSC 9923 / NRRL Y-1056</strain>
    </source>
</reference>
<sequence length="476" mass="53075">MGNVPGKLEAEEYGAMNGRRGGSQKQFRSLSQSSTASSGSAAADSGRSRRATSLVGNLLSSGGVSRAESYGGSAYRRRVAREKDRLREQHALRLVVRSEETVDGGYLAPYGSYRLEKLDYDAPVVQGLIVERRLAPFYTPLQDFDEGWTREELVRVVDSLLLHAPFEEEPEEFEGVPLGNLGVADIDALVDKTLSRREQRRQRSKIFRARLHRKRILWQEEENSKFLELKLEARRTGVSSACLPSDDAKWDLYRNGAECPICFLYFPEPMNVSRCCLQPICTECFVQIKRQEPHFSHDEVDPAQPDEDKDPDLLISTPASCPFCATPNFGVTYKPPADRILGIQGGPPSSYVSACSDPPHHHTEPPPRRTSVAHDHSSVVTSDMIRPDWETELIKERTKLARRAANATAIHVSNRLVDPGHTRGYSNSFASASSTYASNSSMTADFEEEMIRHVMRLSLLDQQPNATSISPGPVDR</sequence>
<proteinExistence type="inferred from homology"/>
<keyword id="KW-0963">Cytoplasm</keyword>
<keyword id="KW-1185">Reference proteome</keyword>
<evidence type="ECO:0000250" key="1"/>
<evidence type="ECO:0000256" key="2">
    <source>
        <dbReference type="SAM" id="MobiDB-lite"/>
    </source>
</evidence>
<evidence type="ECO:0000305" key="3"/>
<protein>
    <recommendedName>
        <fullName>Protein SIP5</fullName>
    </recommendedName>
</protein>
<dbReference type="EMBL" id="AE016817">
    <property type="protein sequence ID" value="AAS52175.2"/>
    <property type="molecule type" value="Genomic_DNA"/>
</dbReference>
<dbReference type="RefSeq" id="NP_984351.2">
    <property type="nucleotide sequence ID" value="NM_209704.2"/>
</dbReference>
<dbReference type="FunCoup" id="Q759M1">
    <property type="interactions" value="61"/>
</dbReference>
<dbReference type="STRING" id="284811.Q759M1"/>
<dbReference type="EnsemblFungi" id="AAS52175">
    <property type="protein sequence ID" value="AAS52175"/>
    <property type="gene ID" value="AGOS_ADR255W"/>
</dbReference>
<dbReference type="GeneID" id="4620513"/>
<dbReference type="KEGG" id="ago:AGOS_ADR255W"/>
<dbReference type="eggNOG" id="KOG2789">
    <property type="taxonomic scope" value="Eukaryota"/>
</dbReference>
<dbReference type="HOGENOM" id="CLU_009068_2_0_1"/>
<dbReference type="InParanoid" id="Q759M1"/>
<dbReference type="OMA" id="ISEPANC"/>
<dbReference type="OrthoDB" id="21471at2759"/>
<dbReference type="Proteomes" id="UP000000591">
    <property type="component" value="Chromosome IV"/>
</dbReference>
<dbReference type="GO" id="GO:0005737">
    <property type="term" value="C:cytoplasm"/>
    <property type="evidence" value="ECO:0007669"/>
    <property type="project" value="UniProtKB-SubCell"/>
</dbReference>
<dbReference type="GO" id="GO:0042149">
    <property type="term" value="P:cellular response to glucose starvation"/>
    <property type="evidence" value="ECO:0007669"/>
    <property type="project" value="EnsemblFungi"/>
</dbReference>
<dbReference type="CDD" id="cd24139">
    <property type="entry name" value="SIP5-like"/>
    <property type="match status" value="1"/>
</dbReference>
<dbReference type="InterPro" id="IPR039301">
    <property type="entry name" value="Sip5/DA2"/>
</dbReference>
<dbReference type="PANTHER" id="PTHR31315">
    <property type="entry name" value="PROTEIN SIP5"/>
    <property type="match status" value="1"/>
</dbReference>
<dbReference type="PANTHER" id="PTHR31315:SF1">
    <property type="entry name" value="PROTEIN SIP5"/>
    <property type="match status" value="1"/>
</dbReference>